<organism>
    <name type="scientific">Yersinia pestis bv. Antiqua (strain Angola)</name>
    <dbReference type="NCBI Taxonomy" id="349746"/>
    <lineage>
        <taxon>Bacteria</taxon>
        <taxon>Pseudomonadati</taxon>
        <taxon>Pseudomonadota</taxon>
        <taxon>Gammaproteobacteria</taxon>
        <taxon>Enterobacterales</taxon>
        <taxon>Yersiniaceae</taxon>
        <taxon>Yersinia</taxon>
    </lineage>
</organism>
<feature type="chain" id="PRO_1000136981" description="5'-deoxynucleotidase YpAngola_A1820">
    <location>
        <begin position="1"/>
        <end position="197"/>
    </location>
</feature>
<feature type="domain" description="HD" evidence="2">
    <location>
        <begin position="28"/>
        <end position="140"/>
    </location>
</feature>
<feature type="binding site" evidence="1">
    <location>
        <begin position="16"/>
        <end position="17"/>
    </location>
    <ligand>
        <name>substrate</name>
    </ligand>
</feature>
<feature type="binding site" evidence="1">
    <location>
        <position position="31"/>
    </location>
    <ligand>
        <name>a divalent metal cation</name>
        <dbReference type="ChEBI" id="CHEBI:60240"/>
    </ligand>
</feature>
<feature type="binding site" evidence="1">
    <location>
        <position position="31"/>
    </location>
    <ligand>
        <name>substrate</name>
    </ligand>
</feature>
<feature type="binding site" evidence="1">
    <location>
        <position position="66"/>
    </location>
    <ligand>
        <name>a divalent metal cation</name>
        <dbReference type="ChEBI" id="CHEBI:60240"/>
    </ligand>
</feature>
<feature type="binding site" evidence="1">
    <location>
        <position position="67"/>
    </location>
    <ligand>
        <name>a divalent metal cation</name>
        <dbReference type="ChEBI" id="CHEBI:60240"/>
    </ligand>
</feature>
<feature type="binding site" evidence="1">
    <location>
        <position position="67"/>
    </location>
    <ligand>
        <name>substrate</name>
    </ligand>
</feature>
<feature type="binding site" evidence="1">
    <location>
        <begin position="75"/>
        <end position="78"/>
    </location>
    <ligand>
        <name>substrate</name>
    </ligand>
</feature>
<feature type="binding site" evidence="1">
    <location>
        <position position="135"/>
    </location>
    <ligand>
        <name>a divalent metal cation</name>
        <dbReference type="ChEBI" id="CHEBI:60240"/>
    </ligand>
</feature>
<feature type="binding site" evidence="1">
    <location>
        <position position="135"/>
    </location>
    <ligand>
        <name>substrate</name>
    </ligand>
</feature>
<feature type="site" description="Appears to be important in orienting the phosphate for catalysis" evidence="1">
    <location>
        <position position="16"/>
    </location>
</feature>
<reference key="1">
    <citation type="journal article" date="2010" name="J. Bacteriol.">
        <title>Genome sequence of the deep-rooted Yersinia pestis strain Angola reveals new insights into the evolution and pangenome of the plague bacterium.</title>
        <authorList>
            <person name="Eppinger M."/>
            <person name="Worsham P.L."/>
            <person name="Nikolich M.P."/>
            <person name="Riley D.R."/>
            <person name="Sebastian Y."/>
            <person name="Mou S."/>
            <person name="Achtman M."/>
            <person name="Lindler L.E."/>
            <person name="Ravel J."/>
        </authorList>
    </citation>
    <scope>NUCLEOTIDE SEQUENCE [LARGE SCALE GENOMIC DNA]</scope>
    <source>
        <strain>Angola</strain>
    </source>
</reference>
<sequence>MSHFFAHLSRLKLINRWPLMRNVRTENVSEHSLQVAFVAHALAIIKNRKFNGNLNAERIALLAMYHDASEVITGDLPTPIKYHNPKIAHEYKKIEKVAQQKLIEMLPKELQHDFRCLLDEHYYSEEEKALVKQADALCAYLKCLEELSAGNNEFIQAKARLEKTLAIRQSPEMDYFMAVFVPSFSLSLDEISLDSLD</sequence>
<gene>
    <name type="ordered locus">YpAngola_A1820</name>
</gene>
<proteinExistence type="inferred from homology"/>
<protein>
    <recommendedName>
        <fullName evidence="1">5'-deoxynucleotidase YpAngola_A1820</fullName>
        <ecNumber evidence="1">3.1.3.89</ecNumber>
    </recommendedName>
    <alternativeName>
        <fullName evidence="1">5'-deoxyribonucleotidase</fullName>
    </alternativeName>
    <alternativeName>
        <fullName evidence="1">Nucleoside 5'-monophosphate phosphohydrolase</fullName>
    </alternativeName>
</protein>
<name>5DNU_YERPG</name>
<keyword id="KW-0963">Cytoplasm</keyword>
<keyword id="KW-0378">Hydrolase</keyword>
<keyword id="KW-0479">Metal-binding</keyword>
<keyword id="KW-0547">Nucleotide-binding</keyword>
<dbReference type="EC" id="3.1.3.89" evidence="1"/>
<dbReference type="EMBL" id="CP000901">
    <property type="protein sequence ID" value="ABX88663.1"/>
    <property type="molecule type" value="Genomic_DNA"/>
</dbReference>
<dbReference type="SMR" id="A9R6M4"/>
<dbReference type="KEGG" id="ypg:YpAngola_A1820"/>
<dbReference type="PATRIC" id="fig|349746.12.peg.2796"/>
<dbReference type="GO" id="GO:0005737">
    <property type="term" value="C:cytoplasm"/>
    <property type="evidence" value="ECO:0007669"/>
    <property type="project" value="UniProtKB-SubCell"/>
</dbReference>
<dbReference type="GO" id="GO:0002953">
    <property type="term" value="F:5'-deoxynucleotidase activity"/>
    <property type="evidence" value="ECO:0007669"/>
    <property type="project" value="UniProtKB-EC"/>
</dbReference>
<dbReference type="GO" id="GO:0046872">
    <property type="term" value="F:metal ion binding"/>
    <property type="evidence" value="ECO:0007669"/>
    <property type="project" value="UniProtKB-KW"/>
</dbReference>
<dbReference type="GO" id="GO:0000166">
    <property type="term" value="F:nucleotide binding"/>
    <property type="evidence" value="ECO:0007669"/>
    <property type="project" value="UniProtKB-KW"/>
</dbReference>
<dbReference type="FunFam" id="1.10.3210.10:FF:000002">
    <property type="entry name" value="Nucleotidase YfbR"/>
    <property type="match status" value="1"/>
</dbReference>
<dbReference type="Gene3D" id="1.10.3210.10">
    <property type="entry name" value="Hypothetical protein af1432"/>
    <property type="match status" value="1"/>
</dbReference>
<dbReference type="HAMAP" id="MF_01100">
    <property type="entry name" value="5DNU"/>
    <property type="match status" value="1"/>
</dbReference>
<dbReference type="InterPro" id="IPR003607">
    <property type="entry name" value="HD/PDEase_dom"/>
</dbReference>
<dbReference type="InterPro" id="IPR006674">
    <property type="entry name" value="HD_domain"/>
</dbReference>
<dbReference type="InterPro" id="IPR022971">
    <property type="entry name" value="YfbR"/>
</dbReference>
<dbReference type="InterPro" id="IPR039356">
    <property type="entry name" value="YfbR/HDDC2"/>
</dbReference>
<dbReference type="NCBIfam" id="NF003009">
    <property type="entry name" value="PRK03826.1"/>
    <property type="match status" value="1"/>
</dbReference>
<dbReference type="PANTHER" id="PTHR11845">
    <property type="entry name" value="5'-DEOXYNUCLEOTIDASE HDDC2"/>
    <property type="match status" value="1"/>
</dbReference>
<dbReference type="PANTHER" id="PTHR11845:SF13">
    <property type="entry name" value="5'-DEOXYNUCLEOTIDASE HDDC2"/>
    <property type="match status" value="1"/>
</dbReference>
<dbReference type="Pfam" id="PF12917">
    <property type="entry name" value="YfbR-like"/>
    <property type="match status" value="1"/>
</dbReference>
<dbReference type="SMART" id="SM00471">
    <property type="entry name" value="HDc"/>
    <property type="match status" value="1"/>
</dbReference>
<dbReference type="SUPFAM" id="SSF109604">
    <property type="entry name" value="HD-domain/PDEase-like"/>
    <property type="match status" value="1"/>
</dbReference>
<dbReference type="PROSITE" id="PS51831">
    <property type="entry name" value="HD"/>
    <property type="match status" value="1"/>
</dbReference>
<accession>A9R6M4</accession>
<comment type="function">
    <text evidence="1">Catalyzes the strictly specific dephosphorylation of 2'-deoxyribonucleoside 5'-monophosphates.</text>
</comment>
<comment type="catalytic activity">
    <reaction evidence="1">
        <text>a 2'-deoxyribonucleoside 5'-phosphate + H2O = a 2'-deoxyribonucleoside + phosphate</text>
        <dbReference type="Rhea" id="RHEA:36167"/>
        <dbReference type="ChEBI" id="CHEBI:15377"/>
        <dbReference type="ChEBI" id="CHEBI:18274"/>
        <dbReference type="ChEBI" id="CHEBI:43474"/>
        <dbReference type="ChEBI" id="CHEBI:65317"/>
        <dbReference type="EC" id="3.1.3.89"/>
    </reaction>
</comment>
<comment type="cofactor">
    <cofactor evidence="1">
        <name>a divalent metal cation</name>
        <dbReference type="ChEBI" id="CHEBI:60240"/>
    </cofactor>
</comment>
<comment type="subunit">
    <text evidence="1">Homodimer.</text>
</comment>
<comment type="subcellular location">
    <subcellularLocation>
        <location evidence="1">Cytoplasm</location>
    </subcellularLocation>
</comment>
<comment type="similarity">
    <text evidence="1">Belongs to the 5DNU family.</text>
</comment>
<evidence type="ECO:0000255" key="1">
    <source>
        <dbReference type="HAMAP-Rule" id="MF_01100"/>
    </source>
</evidence>
<evidence type="ECO:0000255" key="2">
    <source>
        <dbReference type="PROSITE-ProRule" id="PRU01175"/>
    </source>
</evidence>